<protein>
    <recommendedName>
        <fullName evidence="1">Hydroxyacylglutathione hydrolase</fullName>
        <ecNumber evidence="1">3.1.2.6</ecNumber>
    </recommendedName>
    <alternativeName>
        <fullName evidence="1">Glyoxalase II</fullName>
        <shortName evidence="1">Glx II</shortName>
    </alternativeName>
</protein>
<dbReference type="EC" id="3.1.2.6" evidence="1"/>
<dbReference type="EMBL" id="CP000319">
    <property type="protein sequence ID" value="ABE61356.1"/>
    <property type="molecule type" value="Genomic_DNA"/>
</dbReference>
<dbReference type="RefSeq" id="WP_011509060.1">
    <property type="nucleotide sequence ID" value="NC_007964.1"/>
</dbReference>
<dbReference type="SMR" id="Q1QQZ1"/>
<dbReference type="STRING" id="323097.Nham_0466"/>
<dbReference type="KEGG" id="nha:Nham_0466"/>
<dbReference type="eggNOG" id="COG0491">
    <property type="taxonomic scope" value="Bacteria"/>
</dbReference>
<dbReference type="HOGENOM" id="CLU_030571_4_1_5"/>
<dbReference type="OrthoDB" id="9802248at2"/>
<dbReference type="UniPathway" id="UPA00619">
    <property type="reaction ID" value="UER00676"/>
</dbReference>
<dbReference type="Proteomes" id="UP000001953">
    <property type="component" value="Chromosome"/>
</dbReference>
<dbReference type="GO" id="GO:0004416">
    <property type="term" value="F:hydroxyacylglutathione hydrolase activity"/>
    <property type="evidence" value="ECO:0007669"/>
    <property type="project" value="UniProtKB-UniRule"/>
</dbReference>
<dbReference type="GO" id="GO:0046872">
    <property type="term" value="F:metal ion binding"/>
    <property type="evidence" value="ECO:0007669"/>
    <property type="project" value="UniProtKB-KW"/>
</dbReference>
<dbReference type="GO" id="GO:0019243">
    <property type="term" value="P:methylglyoxal catabolic process to D-lactate via S-lactoyl-glutathione"/>
    <property type="evidence" value="ECO:0007669"/>
    <property type="project" value="InterPro"/>
</dbReference>
<dbReference type="CDD" id="cd07723">
    <property type="entry name" value="hydroxyacylglutathione_hydrolase_MBL-fold"/>
    <property type="match status" value="1"/>
</dbReference>
<dbReference type="Gene3D" id="3.60.15.10">
    <property type="entry name" value="Ribonuclease Z/Hydroxyacylglutathione hydrolase-like"/>
    <property type="match status" value="1"/>
</dbReference>
<dbReference type="HAMAP" id="MF_01374">
    <property type="entry name" value="Glyoxalase_2"/>
    <property type="match status" value="1"/>
</dbReference>
<dbReference type="InterPro" id="IPR035680">
    <property type="entry name" value="Clx_II_MBL"/>
</dbReference>
<dbReference type="InterPro" id="IPR050110">
    <property type="entry name" value="Glyoxalase_II_hydrolase"/>
</dbReference>
<dbReference type="InterPro" id="IPR032282">
    <property type="entry name" value="HAGH_C"/>
</dbReference>
<dbReference type="InterPro" id="IPR017782">
    <property type="entry name" value="Hydroxyacylglutathione_Hdrlase"/>
</dbReference>
<dbReference type="InterPro" id="IPR001279">
    <property type="entry name" value="Metallo-B-lactamas"/>
</dbReference>
<dbReference type="InterPro" id="IPR036866">
    <property type="entry name" value="RibonucZ/Hydroxyglut_hydro"/>
</dbReference>
<dbReference type="NCBIfam" id="TIGR03413">
    <property type="entry name" value="GSH_gloB"/>
    <property type="match status" value="1"/>
</dbReference>
<dbReference type="PANTHER" id="PTHR43705">
    <property type="entry name" value="HYDROXYACYLGLUTATHIONE HYDROLASE"/>
    <property type="match status" value="1"/>
</dbReference>
<dbReference type="PANTHER" id="PTHR43705:SF1">
    <property type="entry name" value="HYDROXYACYLGLUTATHIONE HYDROLASE GLOB"/>
    <property type="match status" value="1"/>
</dbReference>
<dbReference type="Pfam" id="PF16123">
    <property type="entry name" value="HAGH_C"/>
    <property type="match status" value="1"/>
</dbReference>
<dbReference type="Pfam" id="PF00753">
    <property type="entry name" value="Lactamase_B"/>
    <property type="match status" value="1"/>
</dbReference>
<dbReference type="PIRSF" id="PIRSF005457">
    <property type="entry name" value="Glx"/>
    <property type="match status" value="1"/>
</dbReference>
<dbReference type="SMART" id="SM00849">
    <property type="entry name" value="Lactamase_B"/>
    <property type="match status" value="1"/>
</dbReference>
<dbReference type="SUPFAM" id="SSF56281">
    <property type="entry name" value="Metallo-hydrolase/oxidoreductase"/>
    <property type="match status" value="1"/>
</dbReference>
<accession>Q1QQZ1</accession>
<evidence type="ECO:0000255" key="1">
    <source>
        <dbReference type="HAMAP-Rule" id="MF_01374"/>
    </source>
</evidence>
<comment type="function">
    <text evidence="1">Thiolesterase that catalyzes the hydrolysis of S-D-lactoyl-glutathione to form glutathione and D-lactic acid.</text>
</comment>
<comment type="catalytic activity">
    <reaction evidence="1">
        <text>an S-(2-hydroxyacyl)glutathione + H2O = a 2-hydroxy carboxylate + glutathione + H(+)</text>
        <dbReference type="Rhea" id="RHEA:21864"/>
        <dbReference type="ChEBI" id="CHEBI:15377"/>
        <dbReference type="ChEBI" id="CHEBI:15378"/>
        <dbReference type="ChEBI" id="CHEBI:57925"/>
        <dbReference type="ChEBI" id="CHEBI:58896"/>
        <dbReference type="ChEBI" id="CHEBI:71261"/>
        <dbReference type="EC" id="3.1.2.6"/>
    </reaction>
</comment>
<comment type="cofactor">
    <cofactor evidence="1">
        <name>Zn(2+)</name>
        <dbReference type="ChEBI" id="CHEBI:29105"/>
    </cofactor>
    <text evidence="1">Binds 2 Zn(2+) ions per subunit.</text>
</comment>
<comment type="pathway">
    <text evidence="1">Secondary metabolite metabolism; methylglyoxal degradation; (R)-lactate from methylglyoxal: step 2/2.</text>
</comment>
<comment type="subunit">
    <text evidence="1">Monomer.</text>
</comment>
<comment type="similarity">
    <text evidence="1">Belongs to the metallo-beta-lactamase superfamily. Glyoxalase II family.</text>
</comment>
<sequence>MTADIRLFTCLTDNFGVLIHDPATDATAAIDAPEAGPIIEALDREGWTLTDILVTHHHADHIGGIAELKQKYKCRVVAPHDKKAPIANVDLRVGQGDIVKVGTLLGRVLETPGHTLDHISYVFDDEKVVFAADTLFSIGCGRVIEGTYPMMWDSLLKLRALPDDFRLYCGHEYTASNVKFALTVEPNNAALKARAEDVARLRAENKPTVPTLMGEEKKANVFLRADDPAVAAGVHMKGASGADVFGELRERKNKS</sequence>
<proteinExistence type="inferred from homology"/>
<gene>
    <name evidence="1" type="primary">gloB</name>
    <name type="ordered locus">Nham_0466</name>
</gene>
<organism>
    <name type="scientific">Nitrobacter hamburgensis (strain DSM 10229 / NCIMB 13809 / X14)</name>
    <dbReference type="NCBI Taxonomy" id="323097"/>
    <lineage>
        <taxon>Bacteria</taxon>
        <taxon>Pseudomonadati</taxon>
        <taxon>Pseudomonadota</taxon>
        <taxon>Alphaproteobacteria</taxon>
        <taxon>Hyphomicrobiales</taxon>
        <taxon>Nitrobacteraceae</taxon>
        <taxon>Nitrobacter</taxon>
    </lineage>
</organism>
<keyword id="KW-0378">Hydrolase</keyword>
<keyword id="KW-0479">Metal-binding</keyword>
<keyword id="KW-1185">Reference proteome</keyword>
<keyword id="KW-0862">Zinc</keyword>
<name>GLO2_NITHX</name>
<feature type="chain" id="PRO_0000309666" description="Hydroxyacylglutathione hydrolase">
    <location>
        <begin position="1"/>
        <end position="255"/>
    </location>
</feature>
<feature type="binding site" evidence="1">
    <location>
        <position position="56"/>
    </location>
    <ligand>
        <name>Zn(2+)</name>
        <dbReference type="ChEBI" id="CHEBI:29105"/>
        <label>1</label>
    </ligand>
</feature>
<feature type="binding site" evidence="1">
    <location>
        <position position="58"/>
    </location>
    <ligand>
        <name>Zn(2+)</name>
        <dbReference type="ChEBI" id="CHEBI:29105"/>
        <label>1</label>
    </ligand>
</feature>
<feature type="binding site" evidence="1">
    <location>
        <position position="60"/>
    </location>
    <ligand>
        <name>Zn(2+)</name>
        <dbReference type="ChEBI" id="CHEBI:29105"/>
        <label>2</label>
    </ligand>
</feature>
<feature type="binding site" evidence="1">
    <location>
        <position position="61"/>
    </location>
    <ligand>
        <name>Zn(2+)</name>
        <dbReference type="ChEBI" id="CHEBI:29105"/>
        <label>2</label>
    </ligand>
</feature>
<feature type="binding site" evidence="1">
    <location>
        <position position="114"/>
    </location>
    <ligand>
        <name>Zn(2+)</name>
        <dbReference type="ChEBI" id="CHEBI:29105"/>
        <label>1</label>
    </ligand>
</feature>
<feature type="binding site" evidence="1">
    <location>
        <position position="133"/>
    </location>
    <ligand>
        <name>Zn(2+)</name>
        <dbReference type="ChEBI" id="CHEBI:29105"/>
        <label>1</label>
    </ligand>
</feature>
<feature type="binding site" evidence="1">
    <location>
        <position position="133"/>
    </location>
    <ligand>
        <name>Zn(2+)</name>
        <dbReference type="ChEBI" id="CHEBI:29105"/>
        <label>2</label>
    </ligand>
</feature>
<feature type="binding site" evidence="1">
    <location>
        <position position="171"/>
    </location>
    <ligand>
        <name>Zn(2+)</name>
        <dbReference type="ChEBI" id="CHEBI:29105"/>
        <label>2</label>
    </ligand>
</feature>
<reference key="1">
    <citation type="submission" date="2006-03" db="EMBL/GenBank/DDBJ databases">
        <title>Complete sequence of chromosome of Nitrobacter hamburgensis X14.</title>
        <authorList>
            <consortium name="US DOE Joint Genome Institute"/>
            <person name="Copeland A."/>
            <person name="Lucas S."/>
            <person name="Lapidus A."/>
            <person name="Barry K."/>
            <person name="Detter J.C."/>
            <person name="Glavina del Rio T."/>
            <person name="Hammon N."/>
            <person name="Israni S."/>
            <person name="Dalin E."/>
            <person name="Tice H."/>
            <person name="Pitluck S."/>
            <person name="Chain P."/>
            <person name="Malfatti S."/>
            <person name="Shin M."/>
            <person name="Vergez L."/>
            <person name="Schmutz J."/>
            <person name="Larimer F."/>
            <person name="Land M."/>
            <person name="Hauser L."/>
            <person name="Kyrpides N."/>
            <person name="Ivanova N."/>
            <person name="Ward B."/>
            <person name="Arp D."/>
            <person name="Klotz M."/>
            <person name="Stein L."/>
            <person name="O'Mullan G."/>
            <person name="Starkenburg S."/>
            <person name="Sayavedra L."/>
            <person name="Poret-Peterson A.T."/>
            <person name="Gentry M.E."/>
            <person name="Bruce D."/>
            <person name="Richardson P."/>
        </authorList>
    </citation>
    <scope>NUCLEOTIDE SEQUENCE [LARGE SCALE GENOMIC DNA]</scope>
    <source>
        <strain>DSM 10229 / NCIMB 13809 / X14</strain>
    </source>
</reference>